<comment type="function">
    <text evidence="1">Required for association of the cohesin complex with chromatin during interphase. Plays a role in sister chromatid cohesion and normal progression through prometaphase (By similarity).</text>
</comment>
<comment type="subunit">
    <text evidence="1">Interacts with Nipped-B to form the cohesin loading complex.</text>
</comment>
<comment type="subcellular location">
    <subcellularLocation>
        <location evidence="1">Nucleus</location>
        <location evidence="1">Nucleoplasm</location>
    </subcellularLocation>
    <text evidence="1">Binds to chromatin from the end of mitosis until prophase.</text>
</comment>
<comment type="similarity">
    <text evidence="2">Belongs to the SCC4/mau-2 family.</text>
</comment>
<accession>B4HE12</accession>
<organism>
    <name type="scientific">Drosophila sechellia</name>
    <name type="common">Fruit fly</name>
    <dbReference type="NCBI Taxonomy" id="7238"/>
    <lineage>
        <taxon>Eukaryota</taxon>
        <taxon>Metazoa</taxon>
        <taxon>Ecdysozoa</taxon>
        <taxon>Arthropoda</taxon>
        <taxon>Hexapoda</taxon>
        <taxon>Insecta</taxon>
        <taxon>Pterygota</taxon>
        <taxon>Neoptera</taxon>
        <taxon>Endopterygota</taxon>
        <taxon>Diptera</taxon>
        <taxon>Brachycera</taxon>
        <taxon>Muscomorpha</taxon>
        <taxon>Ephydroidea</taxon>
        <taxon>Drosophilidae</taxon>
        <taxon>Drosophila</taxon>
        <taxon>Sophophora</taxon>
    </lineage>
</organism>
<protein>
    <recommendedName>
        <fullName>MAU2 chromatid cohesion factor homolog</fullName>
    </recommendedName>
    <alternativeName>
        <fullName>Cohesin loading complex subunit SCC4 homolog</fullName>
    </alternativeName>
</protein>
<gene>
    <name type="ORF">GM24202</name>
</gene>
<dbReference type="EMBL" id="CH480815">
    <property type="protein sequence ID" value="EDW42104.1"/>
    <property type="molecule type" value="Genomic_DNA"/>
</dbReference>
<dbReference type="STRING" id="7238.B4HE12"/>
<dbReference type="EnsemblMetazoa" id="FBtr0207187">
    <property type="protein sequence ID" value="FBpp0205679"/>
    <property type="gene ID" value="FBgn0179066"/>
</dbReference>
<dbReference type="EnsemblMetazoa" id="XM_002031082.2">
    <property type="protein sequence ID" value="XP_002031118.1"/>
    <property type="gene ID" value="LOC6606313"/>
</dbReference>
<dbReference type="GeneID" id="6606313"/>
<dbReference type="KEGG" id="dse:6606313"/>
<dbReference type="CTD" id="23383"/>
<dbReference type="HOGENOM" id="CLU_030238_0_0_1"/>
<dbReference type="OMA" id="QDAWYLS"/>
<dbReference type="OrthoDB" id="17993at7215"/>
<dbReference type="PhylomeDB" id="B4HE12"/>
<dbReference type="Proteomes" id="UP000001292">
    <property type="component" value="Unassembled WGS sequence"/>
</dbReference>
<dbReference type="GO" id="GO:0000785">
    <property type="term" value="C:chromatin"/>
    <property type="evidence" value="ECO:0000250"/>
    <property type="project" value="UniProtKB"/>
</dbReference>
<dbReference type="GO" id="GO:0005654">
    <property type="term" value="C:nucleoplasm"/>
    <property type="evidence" value="ECO:0000250"/>
    <property type="project" value="UniProtKB"/>
</dbReference>
<dbReference type="GO" id="GO:0005634">
    <property type="term" value="C:nucleus"/>
    <property type="evidence" value="ECO:0000250"/>
    <property type="project" value="UniProtKB"/>
</dbReference>
<dbReference type="GO" id="GO:0032116">
    <property type="term" value="C:SMC loading complex"/>
    <property type="evidence" value="ECO:0000250"/>
    <property type="project" value="UniProtKB"/>
</dbReference>
<dbReference type="GO" id="GO:0051301">
    <property type="term" value="P:cell division"/>
    <property type="evidence" value="ECO:0007669"/>
    <property type="project" value="UniProtKB-KW"/>
</dbReference>
<dbReference type="GO" id="GO:0007059">
    <property type="term" value="P:chromosome segregation"/>
    <property type="evidence" value="ECO:0007669"/>
    <property type="project" value="UniProtKB-KW"/>
</dbReference>
<dbReference type="GO" id="GO:0034088">
    <property type="term" value="P:maintenance of mitotic sister chromatid cohesion"/>
    <property type="evidence" value="ECO:0000250"/>
    <property type="project" value="UniProtKB"/>
</dbReference>
<dbReference type="FunFam" id="1.25.40.10:FF:000373">
    <property type="entry name" value="MAU2 chromatid cohesion factor homolog"/>
    <property type="match status" value="1"/>
</dbReference>
<dbReference type="FunFam" id="1.25.40.10:FF:000915">
    <property type="entry name" value="MAU2 chromatid cohesion factor homolog"/>
    <property type="match status" value="1"/>
</dbReference>
<dbReference type="Gene3D" id="1.25.40.10">
    <property type="entry name" value="Tetratricopeptide repeat domain"/>
    <property type="match status" value="2"/>
</dbReference>
<dbReference type="InterPro" id="IPR019440">
    <property type="entry name" value="MAU2"/>
</dbReference>
<dbReference type="InterPro" id="IPR011990">
    <property type="entry name" value="TPR-like_helical_dom_sf"/>
</dbReference>
<dbReference type="PANTHER" id="PTHR21394">
    <property type="entry name" value="MAU2 CHROMATID COHESION FACTOR HOMOLOG"/>
    <property type="match status" value="1"/>
</dbReference>
<dbReference type="Pfam" id="PF10345">
    <property type="entry name" value="Cohesin_load"/>
    <property type="match status" value="1"/>
</dbReference>
<dbReference type="SUPFAM" id="SSF48452">
    <property type="entry name" value="TPR-like"/>
    <property type="match status" value="1"/>
</dbReference>
<name>SCC4_DROSE</name>
<keyword id="KW-0131">Cell cycle</keyword>
<keyword id="KW-0132">Cell division</keyword>
<keyword id="KW-0159">Chromosome partition</keyword>
<keyword id="KW-0498">Mitosis</keyword>
<keyword id="KW-0539">Nucleus</keyword>
<keyword id="KW-1185">Reference proteome</keyword>
<keyword id="KW-0677">Repeat</keyword>
<keyword id="KW-0802">TPR repeat</keyword>
<evidence type="ECO:0000250" key="1"/>
<evidence type="ECO:0000305" key="2"/>
<reference key="1">
    <citation type="journal article" date="2007" name="Nature">
        <title>Evolution of genes and genomes on the Drosophila phylogeny.</title>
        <authorList>
            <consortium name="Drosophila 12 genomes consortium"/>
        </authorList>
    </citation>
    <scope>NUCLEOTIDE SEQUENCE [LARGE SCALE GENOMIC DNA]</scope>
    <source>
        <strain>Rob3c / Tucson 14021-0248.25</strain>
    </source>
</reference>
<feature type="chain" id="PRO_0000382736" description="MAU2 chromatid cohesion factor homolog">
    <location>
        <begin position="1"/>
        <end position="632"/>
    </location>
</feature>
<feature type="repeat" description="TPR 1">
    <location>
        <begin position="453"/>
        <end position="486"/>
    </location>
</feature>
<feature type="repeat" description="TPR 2">
    <location>
        <begin position="493"/>
        <end position="526"/>
    </location>
</feature>
<sequence>MSASTSTSTAASQDACYISLLGLAEYFRTSQPPNIKKCIQCLQALFTFMPPSKVEARTHLQMGQILMAYTKNIDLARQHLEKAWSISEPLPNFDVKFDTASLLAQLHLQTDRNSHQAKAMLRRAVELSQNNVYWHCKLLLQLSQIHASDREYSLASELLAVGAESADEASATYLKVLFLLSRAMILMIERKTNDVLALLNSAGQIIDNNIPNPHQKEYLKVFFLVLQVCYYLALGQVKTVKPSLKQLQMSIQTIMAPNWPSDEAIFGANQLEMFVWLPKEQLYVLVYLVTVSHSMMAGYMDKAQKYTEKALTQIEKLKQQEDKPILSVFKVILLEHIVMCRMVMGNRELAIREIAAARDVCMAAPQRSLLRRHSAQLHCLIGLYSMSTNLFEHAERQFVVCVSETSERDLKLFANLNLAIIYLRTKRDTDLKQILDAVSTENTHTYSSQALMGGFYYVQGLHAFHKNSFHEAKRFLRETLKMANAEDLNRLTSCSLVLLSHVFLSIGNSKESMNMVTPAMQLASKIPDIHVQLWGSAILKDLHRMSKDVQHEKDAYANHVKYSENLIADQRKCVQSAHHELVNWFQGDPPVTSGPPAVPVLLMPESSVTASVPVIASTSAAMQPAGQYGQFY</sequence>
<proteinExistence type="inferred from homology"/>